<comment type="catalytic activity">
    <reaction evidence="1">
        <text>tRNA(Arg) + L-arginine + ATP = L-arginyl-tRNA(Arg) + AMP + diphosphate</text>
        <dbReference type="Rhea" id="RHEA:20301"/>
        <dbReference type="Rhea" id="RHEA-COMP:9658"/>
        <dbReference type="Rhea" id="RHEA-COMP:9673"/>
        <dbReference type="ChEBI" id="CHEBI:30616"/>
        <dbReference type="ChEBI" id="CHEBI:32682"/>
        <dbReference type="ChEBI" id="CHEBI:33019"/>
        <dbReference type="ChEBI" id="CHEBI:78442"/>
        <dbReference type="ChEBI" id="CHEBI:78513"/>
        <dbReference type="ChEBI" id="CHEBI:456215"/>
        <dbReference type="EC" id="6.1.1.19"/>
    </reaction>
</comment>
<comment type="subunit">
    <text evidence="1">Monomer.</text>
</comment>
<comment type="subcellular location">
    <subcellularLocation>
        <location evidence="1">Cytoplasm</location>
    </subcellularLocation>
</comment>
<comment type="similarity">
    <text evidence="1">Belongs to the class-I aminoacyl-tRNA synthetase family.</text>
</comment>
<gene>
    <name evidence="1" type="primary">argS</name>
    <name type="ordered locus">CJA_2411</name>
</gene>
<feature type="chain" id="PRO_1000095346" description="Arginine--tRNA ligase">
    <location>
        <begin position="1"/>
        <end position="579"/>
    </location>
</feature>
<feature type="short sequence motif" description="'HIGH' region">
    <location>
        <begin position="123"/>
        <end position="133"/>
    </location>
</feature>
<name>SYR_CELJU</name>
<evidence type="ECO:0000255" key="1">
    <source>
        <dbReference type="HAMAP-Rule" id="MF_00123"/>
    </source>
</evidence>
<keyword id="KW-0030">Aminoacyl-tRNA synthetase</keyword>
<keyword id="KW-0067">ATP-binding</keyword>
<keyword id="KW-0963">Cytoplasm</keyword>
<keyword id="KW-0436">Ligase</keyword>
<keyword id="KW-0547">Nucleotide-binding</keyword>
<keyword id="KW-0648">Protein biosynthesis</keyword>
<keyword id="KW-1185">Reference proteome</keyword>
<proteinExistence type="inferred from homology"/>
<organism>
    <name type="scientific">Cellvibrio japonicus (strain Ueda107)</name>
    <name type="common">Pseudomonas fluorescens subsp. cellulosa</name>
    <dbReference type="NCBI Taxonomy" id="498211"/>
    <lineage>
        <taxon>Bacteria</taxon>
        <taxon>Pseudomonadati</taxon>
        <taxon>Pseudomonadota</taxon>
        <taxon>Gammaproteobacteria</taxon>
        <taxon>Cellvibrionales</taxon>
        <taxon>Cellvibrionaceae</taxon>
        <taxon>Cellvibrio</taxon>
    </lineage>
</organism>
<accession>B3PKE3</accession>
<reference key="1">
    <citation type="journal article" date="2008" name="J. Bacteriol.">
        <title>Insights into plant cell wall degradation from the genome sequence of the soil bacterium Cellvibrio japonicus.</title>
        <authorList>
            <person name="DeBoy R.T."/>
            <person name="Mongodin E.F."/>
            <person name="Fouts D.E."/>
            <person name="Tailford L.E."/>
            <person name="Khouri H."/>
            <person name="Emerson J.B."/>
            <person name="Mohamoud Y."/>
            <person name="Watkins K."/>
            <person name="Henrissat B."/>
            <person name="Gilbert H.J."/>
            <person name="Nelson K.E."/>
        </authorList>
    </citation>
    <scope>NUCLEOTIDE SEQUENCE [LARGE SCALE GENOMIC DNA]</scope>
    <source>
        <strain>Ueda107</strain>
    </source>
</reference>
<sequence>MNIRDLLNQRVLAAMATCGVPADLPALIAPGKKAGFGDYQANGAMGAAKAMGTNPRDLAGKIVAALDLEGIADKLEIAGPGFINIYLKPAWLGKQIALAQTDARLAVPQAEHAQTVVIDYSGPNLAKEMHVGHLRSTIIGDSLARLLEFLGHQVIRQNHVGDWGTQFGMLIAELEEQLGAKGDAALELKDLEVFYQQAKKHFDDDAAFADKARDYVVRLQGGDAQMLKLWQQFKDISLHHSSEIYQQLNVTLTDADVRGESFYNDDLAPLVKALQDQGLAVESEGAQVVFLPELADKDGNPSPVIIQKQGGGFLYATTDLAALRYRVNTLNAKRIMYFIDARQSLHMQQVFTISRKAGFVSDAVSLEHLAFGTMMGSDGKPFKTRTGGTVKLAELLSEAVDRAASVVSEKNPELAGEDIAEIARKVGIGAVKYADLCKTRTNDYVFSWESMLSFEGNTAPYLQYAYTRVQSIFRKAGVAPETLGSPILLGSEQEKALAIKLLQFSEVLDQMAREAMPHLLCTYLYDIASLYMSFYEACPILKEGVDAEVRDSRLRLCHLVARTIAQGLGLLGIEVMERM</sequence>
<protein>
    <recommendedName>
        <fullName evidence="1">Arginine--tRNA ligase</fullName>
        <ecNumber evidence="1">6.1.1.19</ecNumber>
    </recommendedName>
    <alternativeName>
        <fullName evidence="1">Arginyl-tRNA synthetase</fullName>
        <shortName evidence="1">ArgRS</shortName>
    </alternativeName>
</protein>
<dbReference type="EC" id="6.1.1.19" evidence="1"/>
<dbReference type="EMBL" id="CP000934">
    <property type="protein sequence ID" value="ACE83706.1"/>
    <property type="molecule type" value="Genomic_DNA"/>
</dbReference>
<dbReference type="RefSeq" id="WP_012488009.1">
    <property type="nucleotide sequence ID" value="NC_010995.1"/>
</dbReference>
<dbReference type="SMR" id="B3PKE3"/>
<dbReference type="STRING" id="498211.CJA_2411"/>
<dbReference type="KEGG" id="cja:CJA_2411"/>
<dbReference type="eggNOG" id="COG0018">
    <property type="taxonomic scope" value="Bacteria"/>
</dbReference>
<dbReference type="HOGENOM" id="CLU_006406_5_1_6"/>
<dbReference type="OrthoDB" id="9803211at2"/>
<dbReference type="Proteomes" id="UP000001036">
    <property type="component" value="Chromosome"/>
</dbReference>
<dbReference type="GO" id="GO:0005737">
    <property type="term" value="C:cytoplasm"/>
    <property type="evidence" value="ECO:0007669"/>
    <property type="project" value="UniProtKB-SubCell"/>
</dbReference>
<dbReference type="GO" id="GO:0004814">
    <property type="term" value="F:arginine-tRNA ligase activity"/>
    <property type="evidence" value="ECO:0007669"/>
    <property type="project" value="UniProtKB-UniRule"/>
</dbReference>
<dbReference type="GO" id="GO:0005524">
    <property type="term" value="F:ATP binding"/>
    <property type="evidence" value="ECO:0007669"/>
    <property type="project" value="UniProtKB-UniRule"/>
</dbReference>
<dbReference type="GO" id="GO:0006420">
    <property type="term" value="P:arginyl-tRNA aminoacylation"/>
    <property type="evidence" value="ECO:0007669"/>
    <property type="project" value="UniProtKB-UniRule"/>
</dbReference>
<dbReference type="CDD" id="cd07956">
    <property type="entry name" value="Anticodon_Ia_Arg"/>
    <property type="match status" value="1"/>
</dbReference>
<dbReference type="CDD" id="cd00671">
    <property type="entry name" value="ArgRS_core"/>
    <property type="match status" value="1"/>
</dbReference>
<dbReference type="FunFam" id="1.10.730.10:FF:000008">
    <property type="entry name" value="Arginine--tRNA ligase"/>
    <property type="match status" value="1"/>
</dbReference>
<dbReference type="FunFam" id="3.40.50.620:FF:000030">
    <property type="entry name" value="Arginine--tRNA ligase"/>
    <property type="match status" value="1"/>
</dbReference>
<dbReference type="Gene3D" id="3.30.1360.70">
    <property type="entry name" value="Arginyl tRNA synthetase N-terminal domain"/>
    <property type="match status" value="1"/>
</dbReference>
<dbReference type="Gene3D" id="3.40.50.620">
    <property type="entry name" value="HUPs"/>
    <property type="match status" value="1"/>
</dbReference>
<dbReference type="Gene3D" id="1.10.730.10">
    <property type="entry name" value="Isoleucyl-tRNA Synthetase, Domain 1"/>
    <property type="match status" value="1"/>
</dbReference>
<dbReference type="HAMAP" id="MF_00123">
    <property type="entry name" value="Arg_tRNA_synth"/>
    <property type="match status" value="1"/>
</dbReference>
<dbReference type="InterPro" id="IPR001412">
    <property type="entry name" value="aa-tRNA-synth_I_CS"/>
</dbReference>
<dbReference type="InterPro" id="IPR001278">
    <property type="entry name" value="Arg-tRNA-ligase"/>
</dbReference>
<dbReference type="InterPro" id="IPR005148">
    <property type="entry name" value="Arg-tRNA-synth_N"/>
</dbReference>
<dbReference type="InterPro" id="IPR036695">
    <property type="entry name" value="Arg-tRNA-synth_N_sf"/>
</dbReference>
<dbReference type="InterPro" id="IPR035684">
    <property type="entry name" value="ArgRS_core"/>
</dbReference>
<dbReference type="InterPro" id="IPR008909">
    <property type="entry name" value="DALR_anticod-bd"/>
</dbReference>
<dbReference type="InterPro" id="IPR014729">
    <property type="entry name" value="Rossmann-like_a/b/a_fold"/>
</dbReference>
<dbReference type="InterPro" id="IPR009080">
    <property type="entry name" value="tRNAsynth_Ia_anticodon-bd"/>
</dbReference>
<dbReference type="NCBIfam" id="TIGR00456">
    <property type="entry name" value="argS"/>
    <property type="match status" value="1"/>
</dbReference>
<dbReference type="PANTHER" id="PTHR11956:SF5">
    <property type="entry name" value="ARGININE--TRNA LIGASE, CYTOPLASMIC"/>
    <property type="match status" value="1"/>
</dbReference>
<dbReference type="PANTHER" id="PTHR11956">
    <property type="entry name" value="ARGINYL-TRNA SYNTHETASE"/>
    <property type="match status" value="1"/>
</dbReference>
<dbReference type="Pfam" id="PF03485">
    <property type="entry name" value="Arg_tRNA_synt_N"/>
    <property type="match status" value="1"/>
</dbReference>
<dbReference type="Pfam" id="PF05746">
    <property type="entry name" value="DALR_1"/>
    <property type="match status" value="1"/>
</dbReference>
<dbReference type="Pfam" id="PF00750">
    <property type="entry name" value="tRNA-synt_1d"/>
    <property type="match status" value="1"/>
</dbReference>
<dbReference type="PRINTS" id="PR01038">
    <property type="entry name" value="TRNASYNTHARG"/>
</dbReference>
<dbReference type="SMART" id="SM01016">
    <property type="entry name" value="Arg_tRNA_synt_N"/>
    <property type="match status" value="1"/>
</dbReference>
<dbReference type="SMART" id="SM00836">
    <property type="entry name" value="DALR_1"/>
    <property type="match status" value="1"/>
</dbReference>
<dbReference type="SUPFAM" id="SSF47323">
    <property type="entry name" value="Anticodon-binding domain of a subclass of class I aminoacyl-tRNA synthetases"/>
    <property type="match status" value="1"/>
</dbReference>
<dbReference type="SUPFAM" id="SSF55190">
    <property type="entry name" value="Arginyl-tRNA synthetase (ArgRS), N-terminal 'additional' domain"/>
    <property type="match status" value="1"/>
</dbReference>
<dbReference type="SUPFAM" id="SSF52374">
    <property type="entry name" value="Nucleotidylyl transferase"/>
    <property type="match status" value="1"/>
</dbReference>
<dbReference type="PROSITE" id="PS00178">
    <property type="entry name" value="AA_TRNA_LIGASE_I"/>
    <property type="match status" value="1"/>
</dbReference>